<sequence length="268" mass="29976">MEFAHLTVLSLFCLAFVGITATSSEEDYWQSIWPNTPLPKTFSDLLIPSGKTNSLPIKSEELKQYSTLFFEHDLHPRKNFILGNTNSVGSIIRPFTKSRQGVTDSIWLANKEKQSFEDFCYSPTAIAEHKHCVSSLKSMIDQVISHFGSTKIKAISSNFAPYQDQYVVEDVKKVGDNAVMCHRLNFEKVVFNCHQVRETTAYVVSLVASDGTKTKALTVCHHDTRGMNPELLYEALEVTPGTVPVCHFIGNKAAAWVPNHTADNLCVM</sequence>
<accession>P21747</accession>
<dbReference type="EMBL" id="X13210">
    <property type="protein sequence ID" value="CAA31602.1"/>
    <property type="molecule type" value="mRNA"/>
</dbReference>
<dbReference type="PIR" id="S04136">
    <property type="entry name" value="S04136"/>
</dbReference>
<dbReference type="SMR" id="P21747"/>
<dbReference type="InterPro" id="IPR044816">
    <property type="entry name" value="BURP"/>
</dbReference>
<dbReference type="InterPro" id="IPR004873">
    <property type="entry name" value="BURP_dom"/>
</dbReference>
<dbReference type="PANTHER" id="PTHR31236:SF35">
    <property type="entry name" value="ABUNDANT PROTEIN, PUTATIVE-RELATED"/>
    <property type="match status" value="1"/>
</dbReference>
<dbReference type="PANTHER" id="PTHR31236">
    <property type="entry name" value="BURP DOMAIN PROTEIN USPL1-LIKE"/>
    <property type="match status" value="1"/>
</dbReference>
<dbReference type="Pfam" id="PF03181">
    <property type="entry name" value="BURP"/>
    <property type="match status" value="1"/>
</dbReference>
<dbReference type="SMART" id="SM01045">
    <property type="entry name" value="BURP"/>
    <property type="match status" value="1"/>
</dbReference>
<dbReference type="PROSITE" id="PS51277">
    <property type="entry name" value="BURP"/>
    <property type="match status" value="1"/>
</dbReference>
<feature type="signal peptide" evidence="1">
    <location>
        <begin position="1"/>
        <end position="22"/>
    </location>
</feature>
<feature type="chain" id="PRO_0000017350" description="Embryonic abundant protein USP92">
    <location>
        <begin position="23"/>
        <end position="268"/>
    </location>
</feature>
<feature type="repeat" description="1-1">
    <location>
        <begin position="50"/>
        <end position="55"/>
    </location>
</feature>
<feature type="domain" description="BURP" evidence="2">
    <location>
        <begin position="68"/>
        <end position="259"/>
    </location>
</feature>
<feature type="repeat" description="1-2">
    <location>
        <begin position="83"/>
        <end position="88"/>
    </location>
</feature>
<feature type="repeat" description="1-3">
    <location>
        <begin position="101"/>
        <end position="106"/>
    </location>
</feature>
<feature type="repeat" description="2-1">
    <location>
        <begin position="166"/>
        <end position="183"/>
    </location>
</feature>
<feature type="repeat" description="2-2">
    <location>
        <begin position="202"/>
        <end position="222"/>
    </location>
</feature>
<feature type="region of interest" description="3 X 6 AA approximate repeats">
    <location>
        <begin position="50"/>
        <end position="106"/>
    </location>
</feature>
<feature type="region of interest" description="2 X approximate repeats">
    <location>
        <begin position="166"/>
        <end position="222"/>
    </location>
</feature>
<feature type="glycosylation site" description="N-linked (GlcNAc...) asparagine" evidence="1">
    <location>
        <position position="259"/>
    </location>
</feature>
<protein>
    <recommendedName>
        <fullName>Embryonic abundant protein USP92</fullName>
    </recommendedName>
</protein>
<proteinExistence type="evidence at transcript level"/>
<organism>
    <name type="scientific">Vicia faba</name>
    <name type="common">Broad bean</name>
    <name type="synonym">Faba vulgaris</name>
    <dbReference type="NCBI Taxonomy" id="3906"/>
    <lineage>
        <taxon>Eukaryota</taxon>
        <taxon>Viridiplantae</taxon>
        <taxon>Streptophyta</taxon>
        <taxon>Embryophyta</taxon>
        <taxon>Tracheophyta</taxon>
        <taxon>Spermatophyta</taxon>
        <taxon>Magnoliopsida</taxon>
        <taxon>eudicotyledons</taxon>
        <taxon>Gunneridae</taxon>
        <taxon>Pentapetalae</taxon>
        <taxon>rosids</taxon>
        <taxon>fabids</taxon>
        <taxon>Fabales</taxon>
        <taxon>Fabaceae</taxon>
        <taxon>Papilionoideae</taxon>
        <taxon>50 kb inversion clade</taxon>
        <taxon>NPAAA clade</taxon>
        <taxon>Hologalegina</taxon>
        <taxon>IRL clade</taxon>
        <taxon>Fabeae</taxon>
        <taxon>Vicia</taxon>
    </lineage>
</organism>
<reference key="1">
    <citation type="journal article" date="1988" name="Plant Mol. Biol.">
        <title>Abundant embryonic mRNA in field bean (Vicia faba L.) codes for a new class of seed proteins: cDNA cloning and characterization of the primary translation product.</title>
        <authorList>
            <person name="Bassuener R."/>
            <person name="Baeumlein H."/>
            <person name="Huth A."/>
            <person name="Jung R."/>
            <person name="Wobus U."/>
            <person name="Rapoport T.A."/>
            <person name="Saalbach G."/>
            <person name="Muentz K."/>
        </authorList>
        <dbReference type="AGRICOLA" id="IND92000056"/>
    </citation>
    <scope>NUCLEOTIDE SEQUENCE [MRNA]</scope>
    <source>
        <strain>cv. Fribo</strain>
        <tissue>Seed</tissue>
    </source>
</reference>
<comment type="tissue specificity">
    <text>Seed.</text>
</comment>
<comment type="developmental stage">
    <text>Most abundant mRNA species from cotyledons at early stages of development.</text>
</comment>
<evidence type="ECO:0000255" key="1"/>
<evidence type="ECO:0000255" key="2">
    <source>
        <dbReference type="PROSITE-ProRule" id="PRU00604"/>
    </source>
</evidence>
<name>EA92_VICFA</name>
<keyword id="KW-0325">Glycoprotein</keyword>
<keyword id="KW-0677">Repeat</keyword>
<keyword id="KW-0732">Signal</keyword>